<accession>Q90WX8</accession>
<keyword id="KW-0217">Developmental protein</keyword>
<keyword id="KW-0221">Differentiation</keyword>
<keyword id="KW-1015">Disulfide bond</keyword>
<keyword id="KW-0339">Growth factor</keyword>
<keyword id="KW-0524">Neurogenesis</keyword>
<keyword id="KW-1185">Reference proteome</keyword>
<keyword id="KW-0964">Secreted</keyword>
<keyword id="KW-0732">Signal</keyword>
<gene>
    <name evidence="6" type="primary">igf3.L</name>
    <name evidence="2" type="synonym">igf3</name>
</gene>
<comment type="function">
    <text evidence="4 6">The insulin-like growth factors, isolated from plasma, are structurally and functionally related to insulin but have a much higher growth-promoting activity. Promotes anterior neural development.</text>
</comment>
<comment type="subcellular location">
    <subcellularLocation>
        <location evidence="1">Secreted</location>
    </subcellularLocation>
</comment>
<comment type="developmental stage">
    <text evidence="4">Expressed both maternally and zygotically. Expressed in the dorsal midline during gastrulation and neurulation. Expression is strong in the prospective ventral forebrain region of the anterior neural plate.</text>
</comment>
<comment type="similarity">
    <text evidence="3">Belongs to the insulin family.</text>
</comment>
<dbReference type="EMBL" id="AY049735">
    <property type="protein sequence ID" value="AAL06242.1"/>
    <property type="molecule type" value="mRNA"/>
</dbReference>
<dbReference type="RefSeq" id="NP_001082137.1">
    <property type="nucleotide sequence ID" value="NM_001088668.1"/>
</dbReference>
<dbReference type="SMR" id="Q90WX8"/>
<dbReference type="GeneID" id="398245"/>
<dbReference type="KEGG" id="xla:398245"/>
<dbReference type="AGR" id="Xenbase:XB-GENE-5807497"/>
<dbReference type="CTD" id="398245"/>
<dbReference type="Xenbase" id="XB-GENE-5807497">
    <property type="gene designation" value="igf3.L"/>
</dbReference>
<dbReference type="OrthoDB" id="8936076at2759"/>
<dbReference type="Proteomes" id="UP000186698">
    <property type="component" value="Chromosome 7L"/>
</dbReference>
<dbReference type="Bgee" id="398245">
    <property type="expression patterns" value="Expressed in liver and 9 other cell types or tissues"/>
</dbReference>
<dbReference type="GO" id="GO:0005576">
    <property type="term" value="C:extracellular region"/>
    <property type="evidence" value="ECO:0000303"/>
    <property type="project" value="UniProtKB"/>
</dbReference>
<dbReference type="GO" id="GO:0005615">
    <property type="term" value="C:extracellular space"/>
    <property type="evidence" value="ECO:0000318"/>
    <property type="project" value="GO_Central"/>
</dbReference>
<dbReference type="GO" id="GO:0008083">
    <property type="term" value="F:growth factor activity"/>
    <property type="evidence" value="ECO:0000314"/>
    <property type="project" value="UniProtKB"/>
</dbReference>
<dbReference type="GO" id="GO:0005179">
    <property type="term" value="F:hormone activity"/>
    <property type="evidence" value="ECO:0007669"/>
    <property type="project" value="InterPro"/>
</dbReference>
<dbReference type="GO" id="GO:0005159">
    <property type="term" value="F:insulin-like growth factor receptor binding"/>
    <property type="evidence" value="ECO:0000318"/>
    <property type="project" value="GO_Central"/>
</dbReference>
<dbReference type="GO" id="GO:0043539">
    <property type="term" value="F:protein serine/threonine kinase activator activity"/>
    <property type="evidence" value="ECO:0000318"/>
    <property type="project" value="GO_Central"/>
</dbReference>
<dbReference type="GO" id="GO:0048699">
    <property type="term" value="P:generation of neurons"/>
    <property type="evidence" value="ECO:0000314"/>
    <property type="project" value="UniProtKB"/>
</dbReference>
<dbReference type="GO" id="GO:0042104">
    <property type="term" value="P:positive regulation of activated T cell proliferation"/>
    <property type="evidence" value="ECO:0000318"/>
    <property type="project" value="GO_Central"/>
</dbReference>
<dbReference type="GO" id="GO:0046628">
    <property type="term" value="P:positive regulation of insulin receptor signaling pathway"/>
    <property type="evidence" value="ECO:0000318"/>
    <property type="project" value="GO_Central"/>
</dbReference>
<dbReference type="GO" id="GO:0043410">
    <property type="term" value="P:positive regulation of MAPK cascade"/>
    <property type="evidence" value="ECO:0000318"/>
    <property type="project" value="GO_Central"/>
</dbReference>
<dbReference type="GO" id="GO:0045944">
    <property type="term" value="P:positive regulation of transcription by RNA polymerase II"/>
    <property type="evidence" value="ECO:0000318"/>
    <property type="project" value="GO_Central"/>
</dbReference>
<dbReference type="GO" id="GO:1905564">
    <property type="term" value="P:positive regulation of vascular endothelial cell proliferation"/>
    <property type="evidence" value="ECO:0000318"/>
    <property type="project" value="GO_Central"/>
</dbReference>
<dbReference type="GO" id="GO:0051147">
    <property type="term" value="P:regulation of muscle cell differentiation"/>
    <property type="evidence" value="ECO:0000318"/>
    <property type="project" value="GO_Central"/>
</dbReference>
<dbReference type="CDD" id="cd04368">
    <property type="entry name" value="IlGF"/>
    <property type="match status" value="1"/>
</dbReference>
<dbReference type="Gene3D" id="1.10.100.10">
    <property type="entry name" value="Insulin-like"/>
    <property type="match status" value="1"/>
</dbReference>
<dbReference type="InterPro" id="IPR016179">
    <property type="entry name" value="Insulin-like"/>
</dbReference>
<dbReference type="InterPro" id="IPR036438">
    <property type="entry name" value="Insulin-like_sf"/>
</dbReference>
<dbReference type="InterPro" id="IPR022353">
    <property type="entry name" value="Insulin_CS"/>
</dbReference>
<dbReference type="InterPro" id="IPR022352">
    <property type="entry name" value="Insulin_family"/>
</dbReference>
<dbReference type="PANTHER" id="PTHR46886">
    <property type="entry name" value="INSULIN-LIKE GROWTH FACTOR II"/>
    <property type="match status" value="1"/>
</dbReference>
<dbReference type="PANTHER" id="PTHR46886:SF2">
    <property type="entry name" value="INSULIN-LIKE GROWTH FACTOR III"/>
    <property type="match status" value="1"/>
</dbReference>
<dbReference type="Pfam" id="PF00049">
    <property type="entry name" value="Insulin"/>
    <property type="match status" value="2"/>
</dbReference>
<dbReference type="PRINTS" id="PR00276">
    <property type="entry name" value="INSULINFAMLY"/>
</dbReference>
<dbReference type="SMART" id="SM00078">
    <property type="entry name" value="IlGF"/>
    <property type="match status" value="1"/>
</dbReference>
<dbReference type="SUPFAM" id="SSF56994">
    <property type="entry name" value="Insulin-like"/>
    <property type="match status" value="1"/>
</dbReference>
<dbReference type="PROSITE" id="PS00262">
    <property type="entry name" value="INSULIN"/>
    <property type="match status" value="1"/>
</dbReference>
<reference evidence="6 7" key="1">
    <citation type="journal article" date="2001" name="Dev. Cell">
        <title>Neural and head induction by insulin-like growth factor signals.</title>
        <authorList>
            <person name="Pera E.M."/>
            <person name="Wessely O."/>
            <person name="Li S.-Y."/>
            <person name="De Robertis E.M."/>
        </authorList>
    </citation>
    <scope>NUCLEOTIDE SEQUENCE [MRNA]</scope>
    <scope>FUNCTION</scope>
    <scope>DEVELOPMENTAL STAGE</scope>
</reference>
<proteinExistence type="evidence at transcript level"/>
<feature type="signal peptide" evidence="3">
    <location>
        <begin position="1"/>
        <end position="49"/>
    </location>
</feature>
<feature type="chain" id="PRO_0000224643" description="Insulin-like growth factor 3.L" evidence="3">
    <location>
        <begin position="50"/>
        <end position="121"/>
    </location>
</feature>
<feature type="propeptide" id="PRO_0000224644" description="E peptide" evidence="3">
    <location>
        <begin position="122"/>
        <end position="127"/>
    </location>
</feature>
<feature type="region of interest" description="B" evidence="3">
    <location>
        <begin position="49"/>
        <end position="80"/>
    </location>
</feature>
<feature type="region of interest" description="C" evidence="3">
    <location>
        <begin position="81"/>
        <end position="92"/>
    </location>
</feature>
<feature type="region of interest" description="A" evidence="3">
    <location>
        <begin position="93"/>
        <end position="113"/>
    </location>
</feature>
<feature type="region of interest" description="D" evidence="3">
    <location>
        <begin position="114"/>
        <end position="121"/>
    </location>
</feature>
<feature type="disulfide bond" evidence="2">
    <location>
        <begin position="61"/>
        <end position="99"/>
    </location>
</feature>
<feature type="disulfide bond" evidence="2">
    <location>
        <begin position="73"/>
        <end position="112"/>
    </location>
</feature>
<feature type="disulfide bond" evidence="2">
    <location>
        <begin position="98"/>
        <end position="103"/>
    </location>
</feature>
<name>IGF3_XENLA</name>
<evidence type="ECO:0000250" key="1"/>
<evidence type="ECO:0000250" key="2">
    <source>
        <dbReference type="UniProtKB" id="P01344"/>
    </source>
</evidence>
<evidence type="ECO:0000255" key="3"/>
<evidence type="ECO:0000269" key="4">
    <source>
    </source>
</evidence>
<evidence type="ECO:0000303" key="5">
    <source>
    </source>
</evidence>
<evidence type="ECO:0000305" key="6"/>
<evidence type="ECO:0000312" key="7">
    <source>
        <dbReference type="EMBL" id="AAL06242.1"/>
    </source>
</evidence>
<sequence>MPVTAMCLQDSKKLKKAKLTRKKVTPFPFSRMVLCLSLVFTLYVEATNARCLRPRSKELLCGSELVDILQFICGPTGFYVSKGASFRNRNRPGIVEECCFCGCSVAILESYCAAPVTNFTGREEQKS</sequence>
<protein>
    <recommendedName>
        <fullName evidence="6">Insulin-like growth factor 3.L</fullName>
    </recommendedName>
    <alternativeName>
        <fullName evidence="5">Insulin-like growth factor 3</fullName>
        <shortName evidence="5">xIGF-3</shortName>
    </alternativeName>
    <alternativeName>
        <fullName>Insulin-like growth factor III</fullName>
        <shortName>IGF-III</shortName>
    </alternativeName>
</protein>
<organism>
    <name type="scientific">Xenopus laevis</name>
    <name type="common">African clawed frog</name>
    <dbReference type="NCBI Taxonomy" id="8355"/>
    <lineage>
        <taxon>Eukaryota</taxon>
        <taxon>Metazoa</taxon>
        <taxon>Chordata</taxon>
        <taxon>Craniata</taxon>
        <taxon>Vertebrata</taxon>
        <taxon>Euteleostomi</taxon>
        <taxon>Amphibia</taxon>
        <taxon>Batrachia</taxon>
        <taxon>Anura</taxon>
        <taxon>Pipoidea</taxon>
        <taxon>Pipidae</taxon>
        <taxon>Xenopodinae</taxon>
        <taxon>Xenopus</taxon>
        <taxon>Xenopus</taxon>
    </lineage>
</organism>